<feature type="chain" id="PRO_1000018905" description="Bifunctional purine biosynthesis protein PurH">
    <location>
        <begin position="1"/>
        <end position="511"/>
    </location>
</feature>
<feature type="domain" description="MGS-like" evidence="2">
    <location>
        <begin position="1"/>
        <end position="147"/>
    </location>
</feature>
<sequence length="511" mass="56137">MIQIKRALISVSDKSDIVEFAQFLNQNGVEIISTGGTLKLLKDNGIQAIAIDDYTGFPEILEGRVKTLHPKVHGGLLGVVSNPAHKQKMEELKIPKIDLVVVNLYPFLKTVSKPGVQLEEAIENIDIGGPSMIRSAAKNYKHTLVLTDPSDYEEVRVLIASGGISEEVAAGYMRKAFSHTAMYDTAISSWFHKQAGDVFPDVLNLSFLKKQKLRYGENPHQAASFYEPLFVKSDFSPLQGKELSFNNMLDFDAAFHISSLLPENTVCIIKHLNPCGIAYADDPLEAFQLARRTDPISAFGGVIGIKGIVHGELATAITENFVEGVIAQKFTPEALELFSKKPNIRLIEIENFKEALDELDLRPIHHGLLIQERDYTTITEKDLKVVTKKQPTSDDIRGLMFAWSCVRFIKSNAIVYTEENATLGIGAGQMSRVDSVQLGANKALNVGLSVVGSYVASDAFFPFRDGIDALAKAGAKAIIQPGGSVRDAEVIQAADEHGLIMVFTGMRHFRH</sequence>
<keyword id="KW-0378">Hydrolase</keyword>
<keyword id="KW-0511">Multifunctional enzyme</keyword>
<keyword id="KW-0658">Purine biosynthesis</keyword>
<keyword id="KW-0808">Transferase</keyword>
<name>PUR9_LEPBL</name>
<comment type="catalytic activity">
    <reaction evidence="1">
        <text>(6R)-10-formyltetrahydrofolate + 5-amino-1-(5-phospho-beta-D-ribosyl)imidazole-4-carboxamide = 5-formamido-1-(5-phospho-D-ribosyl)imidazole-4-carboxamide + (6S)-5,6,7,8-tetrahydrofolate</text>
        <dbReference type="Rhea" id="RHEA:22192"/>
        <dbReference type="ChEBI" id="CHEBI:57453"/>
        <dbReference type="ChEBI" id="CHEBI:58467"/>
        <dbReference type="ChEBI" id="CHEBI:58475"/>
        <dbReference type="ChEBI" id="CHEBI:195366"/>
        <dbReference type="EC" id="2.1.2.3"/>
    </reaction>
</comment>
<comment type="catalytic activity">
    <reaction evidence="1">
        <text>IMP + H2O = 5-formamido-1-(5-phospho-D-ribosyl)imidazole-4-carboxamide</text>
        <dbReference type="Rhea" id="RHEA:18445"/>
        <dbReference type="ChEBI" id="CHEBI:15377"/>
        <dbReference type="ChEBI" id="CHEBI:58053"/>
        <dbReference type="ChEBI" id="CHEBI:58467"/>
        <dbReference type="EC" id="3.5.4.10"/>
    </reaction>
</comment>
<comment type="pathway">
    <text evidence="1">Purine metabolism; IMP biosynthesis via de novo pathway; 5-formamido-1-(5-phospho-D-ribosyl)imidazole-4-carboxamide from 5-amino-1-(5-phospho-D-ribosyl)imidazole-4-carboxamide (10-formyl THF route): step 1/1.</text>
</comment>
<comment type="pathway">
    <text evidence="1">Purine metabolism; IMP biosynthesis via de novo pathway; IMP from 5-formamido-1-(5-phospho-D-ribosyl)imidazole-4-carboxamide: step 1/1.</text>
</comment>
<comment type="domain">
    <text evidence="1">The IMP cyclohydrolase activity resides in the N-terminal region.</text>
</comment>
<comment type="similarity">
    <text evidence="1">Belongs to the PurH family.</text>
</comment>
<organism>
    <name type="scientific">Leptospira borgpetersenii serovar Hardjo-bovis (strain L550)</name>
    <dbReference type="NCBI Taxonomy" id="355276"/>
    <lineage>
        <taxon>Bacteria</taxon>
        <taxon>Pseudomonadati</taxon>
        <taxon>Spirochaetota</taxon>
        <taxon>Spirochaetia</taxon>
        <taxon>Leptospirales</taxon>
        <taxon>Leptospiraceae</taxon>
        <taxon>Leptospira</taxon>
    </lineage>
</organism>
<dbReference type="EC" id="2.1.2.3" evidence="1"/>
<dbReference type="EC" id="3.5.4.10" evidence="1"/>
<dbReference type="EMBL" id="CP000348">
    <property type="protein sequence ID" value="ABJ79017.1"/>
    <property type="molecule type" value="Genomic_DNA"/>
</dbReference>
<dbReference type="RefSeq" id="WP_011670196.1">
    <property type="nucleotide sequence ID" value="NC_008508.1"/>
</dbReference>
<dbReference type="SMR" id="Q051H8"/>
<dbReference type="KEGG" id="lbl:LBL_1554"/>
<dbReference type="HOGENOM" id="CLU_016316_5_2_12"/>
<dbReference type="UniPathway" id="UPA00074">
    <property type="reaction ID" value="UER00133"/>
</dbReference>
<dbReference type="UniPathway" id="UPA00074">
    <property type="reaction ID" value="UER00135"/>
</dbReference>
<dbReference type="GO" id="GO:0005829">
    <property type="term" value="C:cytosol"/>
    <property type="evidence" value="ECO:0007669"/>
    <property type="project" value="TreeGrafter"/>
</dbReference>
<dbReference type="GO" id="GO:0003937">
    <property type="term" value="F:IMP cyclohydrolase activity"/>
    <property type="evidence" value="ECO:0007669"/>
    <property type="project" value="UniProtKB-UniRule"/>
</dbReference>
<dbReference type="GO" id="GO:0004643">
    <property type="term" value="F:phosphoribosylaminoimidazolecarboxamide formyltransferase activity"/>
    <property type="evidence" value="ECO:0007669"/>
    <property type="project" value="UniProtKB-UniRule"/>
</dbReference>
<dbReference type="GO" id="GO:0006189">
    <property type="term" value="P:'de novo' IMP biosynthetic process"/>
    <property type="evidence" value="ECO:0007669"/>
    <property type="project" value="UniProtKB-UniRule"/>
</dbReference>
<dbReference type="CDD" id="cd01421">
    <property type="entry name" value="IMPCH"/>
    <property type="match status" value="1"/>
</dbReference>
<dbReference type="FunFam" id="3.40.140.20:FF:000001">
    <property type="entry name" value="Bifunctional purine biosynthesis protein PurH"/>
    <property type="match status" value="1"/>
</dbReference>
<dbReference type="FunFam" id="3.40.50.1380:FF:000001">
    <property type="entry name" value="Bifunctional purine biosynthesis protein PurH"/>
    <property type="match status" value="1"/>
</dbReference>
<dbReference type="Gene3D" id="3.40.140.20">
    <property type="match status" value="2"/>
</dbReference>
<dbReference type="Gene3D" id="3.40.50.1380">
    <property type="entry name" value="Methylglyoxal synthase-like domain"/>
    <property type="match status" value="1"/>
</dbReference>
<dbReference type="HAMAP" id="MF_00139">
    <property type="entry name" value="PurH"/>
    <property type="match status" value="1"/>
</dbReference>
<dbReference type="InterPro" id="IPR024051">
    <property type="entry name" value="AICAR_Tfase_dup_dom_sf"/>
</dbReference>
<dbReference type="InterPro" id="IPR016193">
    <property type="entry name" value="Cytidine_deaminase-like"/>
</dbReference>
<dbReference type="InterPro" id="IPR011607">
    <property type="entry name" value="MGS-like_dom"/>
</dbReference>
<dbReference type="InterPro" id="IPR036914">
    <property type="entry name" value="MGS-like_dom_sf"/>
</dbReference>
<dbReference type="InterPro" id="IPR002695">
    <property type="entry name" value="PurH-like"/>
</dbReference>
<dbReference type="NCBIfam" id="NF002049">
    <property type="entry name" value="PRK00881.1"/>
    <property type="match status" value="1"/>
</dbReference>
<dbReference type="NCBIfam" id="TIGR00355">
    <property type="entry name" value="purH"/>
    <property type="match status" value="1"/>
</dbReference>
<dbReference type="PANTHER" id="PTHR11692:SF0">
    <property type="entry name" value="BIFUNCTIONAL PURINE BIOSYNTHESIS PROTEIN ATIC"/>
    <property type="match status" value="1"/>
</dbReference>
<dbReference type="PANTHER" id="PTHR11692">
    <property type="entry name" value="BIFUNCTIONAL PURINE BIOSYNTHESIS PROTEIN PURH"/>
    <property type="match status" value="1"/>
</dbReference>
<dbReference type="Pfam" id="PF01808">
    <property type="entry name" value="AICARFT_IMPCHas"/>
    <property type="match status" value="1"/>
</dbReference>
<dbReference type="Pfam" id="PF02142">
    <property type="entry name" value="MGS"/>
    <property type="match status" value="1"/>
</dbReference>
<dbReference type="PIRSF" id="PIRSF000414">
    <property type="entry name" value="AICARFT_IMPCHas"/>
    <property type="match status" value="1"/>
</dbReference>
<dbReference type="SMART" id="SM00798">
    <property type="entry name" value="AICARFT_IMPCHas"/>
    <property type="match status" value="1"/>
</dbReference>
<dbReference type="SMART" id="SM00851">
    <property type="entry name" value="MGS"/>
    <property type="match status" value="1"/>
</dbReference>
<dbReference type="SUPFAM" id="SSF53927">
    <property type="entry name" value="Cytidine deaminase-like"/>
    <property type="match status" value="1"/>
</dbReference>
<dbReference type="SUPFAM" id="SSF52335">
    <property type="entry name" value="Methylglyoxal synthase-like"/>
    <property type="match status" value="1"/>
</dbReference>
<dbReference type="PROSITE" id="PS51855">
    <property type="entry name" value="MGS"/>
    <property type="match status" value="1"/>
</dbReference>
<proteinExistence type="inferred from homology"/>
<evidence type="ECO:0000255" key="1">
    <source>
        <dbReference type="HAMAP-Rule" id="MF_00139"/>
    </source>
</evidence>
<evidence type="ECO:0000255" key="2">
    <source>
        <dbReference type="PROSITE-ProRule" id="PRU01202"/>
    </source>
</evidence>
<protein>
    <recommendedName>
        <fullName evidence="1">Bifunctional purine biosynthesis protein PurH</fullName>
    </recommendedName>
    <domain>
        <recommendedName>
            <fullName evidence="1">Phosphoribosylaminoimidazolecarboxamide formyltransferase</fullName>
            <ecNumber evidence="1">2.1.2.3</ecNumber>
        </recommendedName>
        <alternativeName>
            <fullName evidence="1">AICAR transformylase</fullName>
        </alternativeName>
    </domain>
    <domain>
        <recommendedName>
            <fullName evidence="1">IMP cyclohydrolase</fullName>
            <ecNumber evidence="1">3.5.4.10</ecNumber>
        </recommendedName>
        <alternativeName>
            <fullName evidence="1">ATIC</fullName>
        </alternativeName>
        <alternativeName>
            <fullName evidence="1">IMP synthase</fullName>
        </alternativeName>
        <alternativeName>
            <fullName evidence="1">Inosinicase</fullName>
        </alternativeName>
    </domain>
</protein>
<gene>
    <name evidence="1" type="primary">purH</name>
    <name type="ordered locus">LBL_1554</name>
</gene>
<accession>Q051H8</accession>
<reference key="1">
    <citation type="journal article" date="2006" name="Proc. Natl. Acad. Sci. U.S.A.">
        <title>Genome reduction in Leptospira borgpetersenii reflects limited transmission potential.</title>
        <authorList>
            <person name="Bulach D.M."/>
            <person name="Zuerner R.L."/>
            <person name="Wilson P."/>
            <person name="Seemann T."/>
            <person name="McGrath A."/>
            <person name="Cullen P.A."/>
            <person name="Davis J."/>
            <person name="Johnson M."/>
            <person name="Kuczek E."/>
            <person name="Alt D.P."/>
            <person name="Peterson-Burch B."/>
            <person name="Coppel R.L."/>
            <person name="Rood J.I."/>
            <person name="Davies J.K."/>
            <person name="Adler B."/>
        </authorList>
    </citation>
    <scope>NUCLEOTIDE SEQUENCE [LARGE SCALE GENOMIC DNA]</scope>
    <source>
        <strain>L550</strain>
    </source>
</reference>